<name>COX1_SALTR</name>
<evidence type="ECO:0000250" key="1">
    <source>
        <dbReference type="UniProtKB" id="P00395"/>
    </source>
</evidence>
<evidence type="ECO:0000250" key="2">
    <source>
        <dbReference type="UniProtKB" id="P00396"/>
    </source>
</evidence>
<evidence type="ECO:0000250" key="3">
    <source>
        <dbReference type="UniProtKB" id="P00401"/>
    </source>
</evidence>
<evidence type="ECO:0000305" key="4"/>
<feature type="chain" id="PRO_0000183412" description="Cytochrome c oxidase subunit 1">
    <location>
        <begin position="1" status="less than"/>
        <end position="109" status="greater than"/>
    </location>
</feature>
<feature type="transmembrane region" description="Helical; Name=VI" evidence="2">
    <location>
        <begin position="1" status="less than"/>
        <end position="27"/>
    </location>
</feature>
<feature type="topological domain" description="Mitochondrial matrix" evidence="2">
    <location>
        <begin position="28"/>
        <end position="35"/>
    </location>
</feature>
<feature type="transmembrane region" description="Helical; Name=VII" evidence="2">
    <location>
        <begin position="36"/>
        <end position="52"/>
    </location>
</feature>
<feature type="topological domain" description="Mitochondrial intermembrane" evidence="2">
    <location>
        <begin position="53"/>
        <end position="64"/>
    </location>
</feature>
<feature type="transmembrane region" description="Helical; Name=VIII" evidence="2">
    <location>
        <begin position="65"/>
        <end position="93"/>
    </location>
</feature>
<feature type="topological domain" description="Mitochondrial matrix" evidence="2">
    <location>
        <begin position="94"/>
        <end position="101"/>
    </location>
</feature>
<feature type="transmembrane region" description="Helical; Name=IX" evidence="2">
    <location>
        <begin position="102"/>
        <end position="109" status="greater than"/>
    </location>
</feature>
<feature type="binding site" evidence="2">
    <location>
        <position position="6"/>
    </location>
    <ligand>
        <name>Cu cation</name>
        <dbReference type="ChEBI" id="CHEBI:23378"/>
        <label>B</label>
    </ligand>
</feature>
<feature type="binding site" evidence="2">
    <location>
        <position position="10"/>
    </location>
    <ligand>
        <name>O2</name>
        <dbReference type="ChEBI" id="CHEBI:15379"/>
    </ligand>
</feature>
<feature type="binding site" evidence="2">
    <location>
        <position position="56"/>
    </location>
    <ligand>
        <name>Cu cation</name>
        <dbReference type="ChEBI" id="CHEBI:23378"/>
        <label>B</label>
    </ligand>
</feature>
<feature type="binding site" evidence="2">
    <location>
        <position position="57"/>
    </location>
    <ligand>
        <name>Cu cation</name>
        <dbReference type="ChEBI" id="CHEBI:23378"/>
        <label>B</label>
    </ligand>
</feature>
<feature type="cross-link" description="1'-histidyl-3'-tyrosine (His-Tyr)" evidence="2">
    <location>
        <begin position="6"/>
        <end position="10"/>
    </location>
</feature>
<feature type="non-terminal residue">
    <location>
        <position position="1"/>
    </location>
</feature>
<feature type="non-terminal residue">
    <location>
        <position position="109"/>
    </location>
</feature>
<comment type="function">
    <text evidence="3">Component of the cytochrome c oxidase, the last enzyme in the mitochondrial electron transport chain which drives oxidative phosphorylation. The respiratory chain contains 3 multisubunit complexes succinate dehydrogenase (complex II, CII), ubiquinol-cytochrome c oxidoreductase (cytochrome b-c1 complex, complex III, CIII) and cytochrome c oxidase (complex IV, CIV), that cooperate to transfer electrons derived from NADH and succinate to molecular oxygen, creating an electrochemical gradient over the inner membrane that drives transmembrane transport and the ATP synthase. Cytochrome c oxidase is the component of the respiratory chain that catalyzes the reduction of oxygen to water. Electrons originating from reduced cytochrome c in the intermembrane space (IMS) are transferred via the dinuclear copper A center (CU(A)) of subunit 2 and heme A of subunit 1 to the active site in subunit 1, a binuclear center (BNC) formed by heme A3 and copper B (CU(B)). The BNC reduces molecular oxygen to 2 water molecules using 4 electrons from cytochrome c in the IMS and 4 protons from the mitochondrial matrix.</text>
</comment>
<comment type="catalytic activity">
    <reaction evidence="3">
        <text>4 Fe(II)-[cytochrome c] + O2 + 8 H(+)(in) = 4 Fe(III)-[cytochrome c] + 2 H2O + 4 H(+)(out)</text>
        <dbReference type="Rhea" id="RHEA:11436"/>
        <dbReference type="Rhea" id="RHEA-COMP:10350"/>
        <dbReference type="Rhea" id="RHEA-COMP:14399"/>
        <dbReference type="ChEBI" id="CHEBI:15377"/>
        <dbReference type="ChEBI" id="CHEBI:15378"/>
        <dbReference type="ChEBI" id="CHEBI:15379"/>
        <dbReference type="ChEBI" id="CHEBI:29033"/>
        <dbReference type="ChEBI" id="CHEBI:29034"/>
        <dbReference type="EC" id="7.1.1.9"/>
    </reaction>
    <physiologicalReaction direction="left-to-right" evidence="3">
        <dbReference type="Rhea" id="RHEA:11437"/>
    </physiologicalReaction>
</comment>
<comment type="cofactor">
    <cofactor evidence="2">
        <name>heme</name>
        <dbReference type="ChEBI" id="CHEBI:30413"/>
    </cofactor>
    <text evidence="2">Binds 2 heme A groups non-covalently per subunit.</text>
</comment>
<comment type="cofactor">
    <cofactor evidence="2">
        <name>Cu cation</name>
        <dbReference type="ChEBI" id="CHEBI:23378"/>
    </cofactor>
    <text evidence="2">Binds a copper B center.</text>
</comment>
<comment type="pathway">
    <text evidence="3">Energy metabolism; oxidative phosphorylation.</text>
</comment>
<comment type="subunit">
    <text evidence="1 2">Component of the cytochrome c oxidase (complex IV, CIV), a multisubunit enzyme composed of 14 subunits. The complex is composed of a catalytic core of 3 subunits MT-CO1, MT-CO2 and MT-CO3, encoded in the mitochondrial DNA, and 11 supernumerary subunits COX4I, COX5A, COX5B, COX6A, COX6B, COX6C, COX7A, COX7B, COX7C, COX8 and NDUFA4, which are encoded in the nuclear genome. The complex exists as a monomer or a dimer and forms supercomplexes (SCs) in the inner mitochondrial membrane with NADH-ubiquinone oxidoreductase (complex I, CI) and ubiquinol-cytochrome c oxidoreductase (cytochrome b-c1 complex, complex III, CIII), resulting in different assemblies (supercomplex SCI(1)III(2)IV(1) and megacomplex MCI(2)III(2)IV(2)) (By similarity). As a newly synthesized protein, rapidly incorporates into a multi-subunit assembly intermediate in the inner membrane, called MITRAC (mitochondrial translation regulation assembly intermediate of cytochrome c oxidase) complex, whose core components are COA3/MITRAC12 and COX14. Within the MITRAC complex, interacts with COA3 and with SMIM20/MITRAC7; the interaction with SMIM20 stabilizes the newly synthesized MT-CO1 and prevents its premature turnover. Interacts with TMEM177 in a COX20-dependent manner (By similarity).</text>
</comment>
<comment type="subcellular location">
    <subcellularLocation>
        <location evidence="2">Mitochondrion inner membrane</location>
        <topology evidence="2">Multi-pass membrane protein</topology>
    </subcellularLocation>
</comment>
<comment type="similarity">
    <text evidence="4">Belongs to the heme-copper respiratory oxidase family.</text>
</comment>
<proteinExistence type="inferred from homology"/>
<geneLocation type="mitochondrion"/>
<accession>P29653</accession>
<sequence length="109" mass="12251">FWFFGHPEVYILILPGFGMISHIVAYYSGKKEPFGYMGMVWAMMAIGLLGFIVWAHHMFTVGMDVDTRAYFTSATMIIAIPTGVKVFSWLATLHGGSIKWETPLLWALG</sequence>
<protein>
    <recommendedName>
        <fullName>Cytochrome c oxidase subunit 1</fullName>
        <ecNumber>7.1.1.9</ecNumber>
    </recommendedName>
    <alternativeName>
        <fullName>Cytochrome c oxidase polypeptide I</fullName>
    </alternativeName>
</protein>
<keyword id="KW-0186">Copper</keyword>
<keyword id="KW-0249">Electron transport</keyword>
<keyword id="KW-0349">Heme</keyword>
<keyword id="KW-0408">Iron</keyword>
<keyword id="KW-0472">Membrane</keyword>
<keyword id="KW-0479">Metal-binding</keyword>
<keyword id="KW-0496">Mitochondrion</keyword>
<keyword id="KW-0999">Mitochondrion inner membrane</keyword>
<keyword id="KW-1185">Reference proteome</keyword>
<keyword id="KW-0679">Respiratory chain</keyword>
<keyword id="KW-0915">Sodium</keyword>
<keyword id="KW-1278">Translocase</keyword>
<keyword id="KW-0812">Transmembrane</keyword>
<keyword id="KW-1133">Transmembrane helix</keyword>
<keyword id="KW-0813">Transport</keyword>
<reference key="1">
    <citation type="journal article" date="1991" name="Mol. Biol. Evol.">
        <title>Phylogenetic relationships of neopterygian fishes, inferred from mitochondrial DNA sequences.</title>
        <authorList>
            <person name="Normark B.B."/>
            <person name="McCune A.R."/>
            <person name="Harrison R.G."/>
        </authorList>
    </citation>
    <scope>NUCLEOTIDE SEQUENCE [GENOMIC DNA]</scope>
</reference>
<organism>
    <name type="scientific">Salmo trutta</name>
    <name type="common">Brown trout</name>
    <dbReference type="NCBI Taxonomy" id="8032"/>
    <lineage>
        <taxon>Eukaryota</taxon>
        <taxon>Metazoa</taxon>
        <taxon>Chordata</taxon>
        <taxon>Craniata</taxon>
        <taxon>Vertebrata</taxon>
        <taxon>Euteleostomi</taxon>
        <taxon>Actinopterygii</taxon>
        <taxon>Neopterygii</taxon>
        <taxon>Teleostei</taxon>
        <taxon>Protacanthopterygii</taxon>
        <taxon>Salmoniformes</taxon>
        <taxon>Salmonidae</taxon>
        <taxon>Salmoninae</taxon>
        <taxon>Salmo</taxon>
    </lineage>
</organism>
<dbReference type="EC" id="7.1.1.9"/>
<dbReference type="EMBL" id="M64917">
    <property type="protein sequence ID" value="AAB01484.1"/>
    <property type="molecule type" value="Genomic_DNA"/>
</dbReference>
<dbReference type="SMR" id="P29653"/>
<dbReference type="UniPathway" id="UPA00705"/>
<dbReference type="Proteomes" id="UP000472277">
    <property type="component" value="Unplaced"/>
</dbReference>
<dbReference type="GO" id="GO:0005743">
    <property type="term" value="C:mitochondrial inner membrane"/>
    <property type="evidence" value="ECO:0007669"/>
    <property type="project" value="UniProtKB-SubCell"/>
</dbReference>
<dbReference type="GO" id="GO:0045277">
    <property type="term" value="C:respiratory chain complex IV"/>
    <property type="evidence" value="ECO:0000250"/>
    <property type="project" value="UniProtKB"/>
</dbReference>
<dbReference type="GO" id="GO:0004129">
    <property type="term" value="F:cytochrome-c oxidase activity"/>
    <property type="evidence" value="ECO:0007669"/>
    <property type="project" value="UniProtKB-EC"/>
</dbReference>
<dbReference type="GO" id="GO:0020037">
    <property type="term" value="F:heme binding"/>
    <property type="evidence" value="ECO:0007669"/>
    <property type="project" value="InterPro"/>
</dbReference>
<dbReference type="GO" id="GO:0046872">
    <property type="term" value="F:metal ion binding"/>
    <property type="evidence" value="ECO:0007669"/>
    <property type="project" value="UniProtKB-KW"/>
</dbReference>
<dbReference type="GO" id="GO:0015990">
    <property type="term" value="P:electron transport coupled proton transport"/>
    <property type="evidence" value="ECO:0007669"/>
    <property type="project" value="TreeGrafter"/>
</dbReference>
<dbReference type="GO" id="GO:0006123">
    <property type="term" value="P:mitochondrial electron transport, cytochrome c to oxygen"/>
    <property type="evidence" value="ECO:0007669"/>
    <property type="project" value="TreeGrafter"/>
</dbReference>
<dbReference type="FunFam" id="1.20.210.10:FF:000021">
    <property type="entry name" value="Cytochrome c oxidase subunit 1"/>
    <property type="match status" value="1"/>
</dbReference>
<dbReference type="Gene3D" id="1.20.210.10">
    <property type="entry name" value="Cytochrome c oxidase-like, subunit I domain"/>
    <property type="match status" value="1"/>
</dbReference>
<dbReference type="InterPro" id="IPR023616">
    <property type="entry name" value="Cyt_c_oxase-like_su1_dom"/>
</dbReference>
<dbReference type="InterPro" id="IPR036927">
    <property type="entry name" value="Cyt_c_oxase-like_su1_sf"/>
</dbReference>
<dbReference type="InterPro" id="IPR000883">
    <property type="entry name" value="Cyt_C_Oxase_1"/>
</dbReference>
<dbReference type="InterPro" id="IPR023615">
    <property type="entry name" value="Cyt_c_Oxase_su1_BS"/>
</dbReference>
<dbReference type="PANTHER" id="PTHR10422">
    <property type="entry name" value="CYTOCHROME C OXIDASE SUBUNIT 1"/>
    <property type="match status" value="1"/>
</dbReference>
<dbReference type="PANTHER" id="PTHR10422:SF18">
    <property type="entry name" value="CYTOCHROME C OXIDASE SUBUNIT 1"/>
    <property type="match status" value="1"/>
</dbReference>
<dbReference type="Pfam" id="PF00115">
    <property type="entry name" value="COX1"/>
    <property type="match status" value="1"/>
</dbReference>
<dbReference type="PRINTS" id="PR01165">
    <property type="entry name" value="CYCOXIDASEI"/>
</dbReference>
<dbReference type="SUPFAM" id="SSF81442">
    <property type="entry name" value="Cytochrome c oxidase subunit I-like"/>
    <property type="match status" value="1"/>
</dbReference>
<dbReference type="PROSITE" id="PS50855">
    <property type="entry name" value="COX1"/>
    <property type="match status" value="1"/>
</dbReference>
<dbReference type="PROSITE" id="PS00077">
    <property type="entry name" value="COX1_CUB"/>
    <property type="match status" value="1"/>
</dbReference>
<gene>
    <name type="primary">mt-co1</name>
    <name type="synonym">coi</name>
    <name type="synonym">coxi</name>
    <name type="synonym">mtco1</name>
</gene>